<keyword id="KW-0067">ATP-binding</keyword>
<keyword id="KW-1003">Cell membrane</keyword>
<keyword id="KW-0325">Glycoprotein</keyword>
<keyword id="KW-0472">Membrane</keyword>
<keyword id="KW-0547">Nucleotide-binding</keyword>
<keyword id="KW-0677">Repeat</keyword>
<keyword id="KW-1278">Translocase</keyword>
<keyword id="KW-0812">Transmembrane</keyword>
<keyword id="KW-1133">Transmembrane helix</keyword>
<keyword id="KW-0813">Transport</keyword>
<keyword id="KW-0843">Virulence</keyword>
<reference key="1">
    <citation type="journal article" date="2004" name="Curr. Genet.">
        <title>Negative selection using thymidine kinase increases the efficiency of recovery of transformants with targeted genes in the filamentous fungus Leptosphaeria maculans.</title>
        <authorList>
            <person name="Gardiner D.M."/>
            <person name="Howlett B.J."/>
        </authorList>
    </citation>
    <scope>NUCLEOTIDE SEQUENCE [GENOMIC DNA]</scope>
</reference>
<reference key="2">
    <citation type="journal article" date="2004" name="Mol. Microbiol.">
        <title>The sirodesmin biosynthetic gene cluster of the plant pathogenic fungus Leptosphaeria maculans.</title>
        <authorList>
            <person name="Gardiner D.M."/>
            <person name="Cozijnsen A.J."/>
            <person name="Wilson L.M."/>
            <person name="Pedras M.S."/>
            <person name="Howlett B.J."/>
        </authorList>
    </citation>
    <scope>NUCLEOTIDE SEQUENCE [GENOMIC DNA]</scope>
    <scope>FUNCTION</scope>
    <scope>INDUCTION</scope>
</reference>
<reference key="3">
    <citation type="journal article" date="2005" name="Fungal Genet. Biol.">
        <title>The ABC transporter gene in the sirodesmin biosynthetic gene cluster of Leptosphaeria maculans is not essential for sirodesmin production but facilitates self-protection.</title>
        <authorList>
            <person name="Gardiner D.M."/>
            <person name="Jarvis R.S."/>
            <person name="Howlett B.J."/>
        </authorList>
    </citation>
    <scope>FUNCTION</scope>
    <scope>INDUCTION</scope>
    <scope>DISRUPTION PHENOTYPE</scope>
</reference>
<reference key="4">
    <citation type="journal article" date="2007" name="Mol. Plant Pathol.">
        <title>Production of the toxin sirodesmin PL by Leptosphaeria maculans during infection of Brassica napus.</title>
        <authorList>
            <person name="Elliott C.E."/>
            <person name="Gardiner D.M."/>
            <person name="Thomas G."/>
            <person name="Cozijnsen A."/>
            <person name="Van de Wouw A."/>
            <person name="Howlett B.J."/>
        </authorList>
    </citation>
    <scope>INDUCTION</scope>
</reference>
<proteinExistence type="evidence at transcript level"/>
<gene>
    <name evidence="9" type="primary">sirA</name>
    <name evidence="8" type="synonym">ABCt4</name>
</gene>
<dbReference type="EC" id="7.6.2.2" evidence="12"/>
<dbReference type="EMBL" id="AY437642">
    <property type="protein sequence ID" value="AAR11078.1"/>
    <property type="molecule type" value="Genomic_DNA"/>
</dbReference>
<dbReference type="EMBL" id="AY553235">
    <property type="protein sequence ID" value="AAS92552.1"/>
    <property type="molecule type" value="Genomic_DNA"/>
</dbReference>
<dbReference type="SMR" id="Q6Q876"/>
<dbReference type="GlyCosmos" id="Q6Q876">
    <property type="glycosylation" value="3 sites, No reported glycans"/>
</dbReference>
<dbReference type="GO" id="GO:0005743">
    <property type="term" value="C:mitochondrial inner membrane"/>
    <property type="evidence" value="ECO:0007669"/>
    <property type="project" value="TreeGrafter"/>
</dbReference>
<dbReference type="GO" id="GO:0005886">
    <property type="term" value="C:plasma membrane"/>
    <property type="evidence" value="ECO:0007669"/>
    <property type="project" value="UniProtKB-SubCell"/>
</dbReference>
<dbReference type="GO" id="GO:0015421">
    <property type="term" value="F:ABC-type oligopeptide transporter activity"/>
    <property type="evidence" value="ECO:0007669"/>
    <property type="project" value="TreeGrafter"/>
</dbReference>
<dbReference type="GO" id="GO:0008559">
    <property type="term" value="F:ABC-type xenobiotic transporter activity"/>
    <property type="evidence" value="ECO:0007669"/>
    <property type="project" value="UniProtKB-EC"/>
</dbReference>
<dbReference type="GO" id="GO:0005524">
    <property type="term" value="F:ATP binding"/>
    <property type="evidence" value="ECO:0007669"/>
    <property type="project" value="UniProtKB-KW"/>
</dbReference>
<dbReference type="GO" id="GO:0016887">
    <property type="term" value="F:ATP hydrolysis activity"/>
    <property type="evidence" value="ECO:0007669"/>
    <property type="project" value="InterPro"/>
</dbReference>
<dbReference type="GO" id="GO:0090374">
    <property type="term" value="P:oligopeptide export from mitochondrion"/>
    <property type="evidence" value="ECO:0007669"/>
    <property type="project" value="TreeGrafter"/>
</dbReference>
<dbReference type="CDD" id="cd18577">
    <property type="entry name" value="ABC_6TM_Pgp_ABCB1_D1_like"/>
    <property type="match status" value="1"/>
</dbReference>
<dbReference type="CDD" id="cd18578">
    <property type="entry name" value="ABC_6TM_Pgp_ABCB1_D2_like"/>
    <property type="match status" value="1"/>
</dbReference>
<dbReference type="CDD" id="cd03249">
    <property type="entry name" value="ABC_MTABC3_MDL1_MDL2"/>
    <property type="match status" value="1"/>
</dbReference>
<dbReference type="FunFam" id="3.40.50.300:FF:000913">
    <property type="entry name" value="ABC multidrug transporter SitT"/>
    <property type="match status" value="1"/>
</dbReference>
<dbReference type="FunFam" id="3.40.50.300:FF:000251">
    <property type="entry name" value="ABC transporter B family member 19"/>
    <property type="match status" value="1"/>
</dbReference>
<dbReference type="Gene3D" id="1.20.1560.10">
    <property type="entry name" value="ABC transporter type 1, transmembrane domain"/>
    <property type="match status" value="1"/>
</dbReference>
<dbReference type="Gene3D" id="3.40.50.300">
    <property type="entry name" value="P-loop containing nucleotide triphosphate hydrolases"/>
    <property type="match status" value="2"/>
</dbReference>
<dbReference type="InterPro" id="IPR003593">
    <property type="entry name" value="AAA+_ATPase"/>
</dbReference>
<dbReference type="InterPro" id="IPR011527">
    <property type="entry name" value="ABC1_TM_dom"/>
</dbReference>
<dbReference type="InterPro" id="IPR036640">
    <property type="entry name" value="ABC1_TM_sf"/>
</dbReference>
<dbReference type="InterPro" id="IPR003439">
    <property type="entry name" value="ABC_transporter-like_ATP-bd"/>
</dbReference>
<dbReference type="InterPro" id="IPR017871">
    <property type="entry name" value="ABC_transporter-like_CS"/>
</dbReference>
<dbReference type="InterPro" id="IPR027417">
    <property type="entry name" value="P-loop_NTPase"/>
</dbReference>
<dbReference type="InterPro" id="IPR039421">
    <property type="entry name" value="Type_1_exporter"/>
</dbReference>
<dbReference type="PANTHER" id="PTHR43394:SF1">
    <property type="entry name" value="ATP-BINDING CASSETTE SUB-FAMILY B MEMBER 10, MITOCHONDRIAL"/>
    <property type="match status" value="1"/>
</dbReference>
<dbReference type="PANTHER" id="PTHR43394">
    <property type="entry name" value="ATP-DEPENDENT PERMEASE MDL1, MITOCHONDRIAL"/>
    <property type="match status" value="1"/>
</dbReference>
<dbReference type="Pfam" id="PF00664">
    <property type="entry name" value="ABC_membrane"/>
    <property type="match status" value="2"/>
</dbReference>
<dbReference type="Pfam" id="PF00005">
    <property type="entry name" value="ABC_tran"/>
    <property type="match status" value="2"/>
</dbReference>
<dbReference type="SMART" id="SM00382">
    <property type="entry name" value="AAA"/>
    <property type="match status" value="2"/>
</dbReference>
<dbReference type="SUPFAM" id="SSF90123">
    <property type="entry name" value="ABC transporter transmembrane region"/>
    <property type="match status" value="2"/>
</dbReference>
<dbReference type="SUPFAM" id="SSF52540">
    <property type="entry name" value="P-loop containing nucleoside triphosphate hydrolases"/>
    <property type="match status" value="2"/>
</dbReference>
<dbReference type="PROSITE" id="PS50929">
    <property type="entry name" value="ABC_TM1F"/>
    <property type="match status" value="2"/>
</dbReference>
<dbReference type="PROSITE" id="PS00211">
    <property type="entry name" value="ABC_TRANSPORTER_1"/>
    <property type="match status" value="2"/>
</dbReference>
<dbReference type="PROSITE" id="PS50893">
    <property type="entry name" value="ABC_TRANSPORTER_2"/>
    <property type="match status" value="2"/>
</dbReference>
<protein>
    <recommendedName>
        <fullName evidence="12">Multidrug resistance protein sirA</fullName>
        <ecNumber evidence="12">7.6.2.2</ecNumber>
    </recommendedName>
    <alternativeName>
        <fullName evidence="8">ABC transporter protein 4</fullName>
    </alternativeName>
    <alternativeName>
        <fullName evidence="9">Sirodesmin biosynthesis protein A</fullName>
    </alternativeName>
    <alternativeName>
        <fullName evidence="9">Sirodesmin transporter sirA</fullName>
    </alternativeName>
</protein>
<accession>Q6Q876</accession>
<feature type="chain" id="PRO_0000437734" description="Multidrug resistance protein sirA">
    <location>
        <begin position="1"/>
        <end position="1263"/>
    </location>
</feature>
<feature type="transmembrane region" description="Helical" evidence="3">
    <location>
        <begin position="57"/>
        <end position="77"/>
    </location>
</feature>
<feature type="transmembrane region" description="Helical" evidence="3">
    <location>
        <begin position="104"/>
        <end position="124"/>
    </location>
</feature>
<feature type="transmembrane region" description="Helical" evidence="3">
    <location>
        <begin position="179"/>
        <end position="199"/>
    </location>
</feature>
<feature type="transmembrane region" description="Helical" evidence="3">
    <location>
        <begin position="206"/>
        <end position="226"/>
    </location>
</feature>
<feature type="transmembrane region" description="Helical" evidence="3">
    <location>
        <begin position="284"/>
        <end position="304"/>
    </location>
</feature>
<feature type="transmembrane region" description="Helical" evidence="3">
    <location>
        <begin position="318"/>
        <end position="338"/>
    </location>
</feature>
<feature type="transmembrane region" description="Helical" evidence="3">
    <location>
        <begin position="699"/>
        <end position="719"/>
    </location>
</feature>
<feature type="transmembrane region" description="Helical" evidence="3">
    <location>
        <begin position="740"/>
        <end position="760"/>
    </location>
</feature>
<feature type="transmembrane region" description="Helical" evidence="3">
    <location>
        <begin position="817"/>
        <end position="839"/>
    </location>
</feature>
<feature type="transmembrane region" description="Helical" evidence="3">
    <location>
        <begin position="843"/>
        <end position="865"/>
    </location>
</feature>
<feature type="transmembrane region" description="Helical" evidence="3">
    <location>
        <begin position="930"/>
        <end position="950"/>
    </location>
</feature>
<feature type="transmembrane region" description="Helical" evidence="3">
    <location>
        <begin position="960"/>
        <end position="980"/>
    </location>
</feature>
<feature type="domain" description="ABC transmembrane type-1 1" evidence="3">
    <location>
        <begin position="57"/>
        <end position="347"/>
    </location>
</feature>
<feature type="domain" description="ABC transporter 1" evidence="2">
    <location>
        <begin position="380"/>
        <end position="625"/>
    </location>
</feature>
<feature type="domain" description="ABC transmembrane type-1 2" evidence="3">
    <location>
        <begin position="699"/>
        <end position="986"/>
    </location>
</feature>
<feature type="domain" description="ABC transporter 2" evidence="2">
    <location>
        <begin position="1021"/>
        <end position="1259"/>
    </location>
</feature>
<feature type="region of interest" description="Disordered" evidence="5">
    <location>
        <begin position="1"/>
        <end position="21"/>
    </location>
</feature>
<feature type="region of interest" description="Disordered" evidence="5">
    <location>
        <begin position="635"/>
        <end position="672"/>
    </location>
</feature>
<feature type="binding site" evidence="2">
    <location>
        <begin position="415"/>
        <end position="422"/>
    </location>
    <ligand>
        <name>ATP</name>
        <dbReference type="ChEBI" id="CHEBI:30616"/>
    </ligand>
</feature>
<feature type="binding site" evidence="2">
    <location>
        <begin position="1056"/>
        <end position="1063"/>
    </location>
    <ligand>
        <name>ATP</name>
        <dbReference type="ChEBI" id="CHEBI:30616"/>
    </ligand>
</feature>
<feature type="glycosylation site" description="N-linked (GlcNAc...) asparagine" evidence="4">
    <location>
        <position position="232"/>
    </location>
</feature>
<feature type="glycosylation site" description="N-linked (GlcNAc...) asparagine" evidence="4">
    <location>
        <position position="384"/>
    </location>
</feature>
<feature type="glycosylation site" description="N-linked (GlcNAc...) asparagine" evidence="4">
    <location>
        <position position="469"/>
    </location>
</feature>
<sequence>MAEPESEKPSSAQGGGLPSSDHPLNPILQRQIELPEIKINYFSLFRYATVKEYALLLISAFFAAVSGAMFPLLILFIGNLVQVLKDFNLGTIPQEQLSEQIRDIALYIVYLFLGQLVSVFIFTNGCLLVGEAITNAIREKYVRSLFRQNIAFFDTYGSGKITSQLTSSTATIQDAISHKIGLFVSACSCFVASYAIGFVKHWKLTFILTSTVVAITGVMIIMSGFMAKFGANSSGALAEASAKLEETFSGIRVVKALGLEKRLSDELDPQLLNIEFWGKRVRHVMGWMLAIMYGLIFLNYGLAIWQGYRFMQGGTEDVGAIITVLMCLNIGAFLFGNVGPHLQAMSLGAAAAQDIFAVIERESVTDGGAPPGSFEVEGNIEFRNVSHVYPSRPDTHVLQDFSMIFPAGKVTAIVGASGSGKSTIVSILERFYEPVSGQVFLDGHDITHLNVQWLRQQFGLVGQEPVLFNGSIFKNVAYGLKGTQYGQESREVTMKLVTEACRIANAHDFITALPHGYDQEVGIRGASLSGGQRQRIAIARAIVSGPKILLLDEATSALDVQSEEAVQLGLNMASSGRTTIVVAHSLSTIKLADNIIVMEKGRVAQQGTHAELEAQEGLYQTFVRRQQLKQATLEPPHARITPAVDTPASPQHRLSEKTGSIYGQGESEAADKSPSTKYSFVQLVKFVARFNKEDWRLMVTGIASAVISGAVWPAHSVFFAKAIVALSSPSPASLARGPNFWAAMYVMLAFVQIASQGVQGSAFAICAERLILRARRVAFKYLLRQDVEFFDDPLHSSGIMTSFVSSDVNALAGLSGVFLGTLFSATATVLGGLILSLAVGWKLTLVTMGTIPIIIVAGYVRLKLVGTLEKISRKVHEESAGRVCEEINAVRTVAASCLEDEMCEDYVRSLKSKEKTYLRATLWSSGWYALSEAVPLGCMSLGFWYGATLVMRTEYTTEQFFIVVTAVIFGASSAGLVFAFAPDFGKAGVSAERLQELVDRQPEVDTWSEEGDHIETTNGKVDVSNVVFYYNQRSKTPVLNSISLGAAPGQSIGLCGGSGSGKSTVASLLERFYNPSSGTVSLDEKDVRTININSYRAQFALVNQEPLLFSCSIRENLLYGSLGKDLTDSEIEEACKMAQVYDFVCSLPEGLDTSFGSNAVMLSGGQRQRLSIARAILRKPRVLILDEATSALDSTSERAVIEALTKTAEGRTTIMVAHRLSTIQGCDKIFYLRAGAVAEEGTHEELMAKRGSYYDSVNLQSLG</sequence>
<organism>
    <name type="scientific">Leptosphaeria maculans</name>
    <name type="common">Blackleg fungus</name>
    <name type="synonym">Phoma lingam</name>
    <dbReference type="NCBI Taxonomy" id="5022"/>
    <lineage>
        <taxon>Eukaryota</taxon>
        <taxon>Fungi</taxon>
        <taxon>Dikarya</taxon>
        <taxon>Ascomycota</taxon>
        <taxon>Pezizomycotina</taxon>
        <taxon>Dothideomycetes</taxon>
        <taxon>Pleosporomycetidae</taxon>
        <taxon>Pleosporales</taxon>
        <taxon>Pleosporineae</taxon>
        <taxon>Leptosphaeriaceae</taxon>
        <taxon>Plenodomus</taxon>
        <taxon>Plenodomus lingam/Leptosphaeria maculans species complex</taxon>
    </lineage>
</organism>
<comment type="function">
    <text evidence="7 11">Sirodesmin transporter that provides the dual role of sirodesmin export and self-protection (PubMed:15387811, PubMed:15707846). Also provides tolerance to gliotoxin (PubMed:15707846).</text>
</comment>
<comment type="catalytic activity">
    <reaction evidence="12">
        <text>ATP + H2O + xenobioticSide 1 = ADP + phosphate + xenobioticSide 2.</text>
        <dbReference type="EC" id="7.6.2.2"/>
    </reaction>
</comment>
<comment type="subcellular location">
    <subcellularLocation>
        <location evidence="10">Cell membrane</location>
        <topology evidence="1">Multi-pass membrane protein</topology>
    </subcellularLocation>
</comment>
<comment type="induction">
    <text evidence="6 7">Expression is regulated by sirodesmin (PubMed:15707846). Expression is co-regulated with the other genes from the sirodesmin cluster and corresponds with sirodesmin production (PubMed:15387811).</text>
</comment>
<comment type="disruption phenotype">
    <text evidence="7">Leads to increased expression of sirP and subsequent production of sirodesmin, as well as to a higher ratio of deacetyl sirodesmin (PubMed:15707846).</text>
</comment>
<comment type="similarity">
    <text evidence="10">Belongs to the ABC transporter superfamily. ABCB family. Multidrug resistance exporter (TC 3.A.1.201) subfamily.</text>
</comment>
<evidence type="ECO:0000255" key="1"/>
<evidence type="ECO:0000255" key="2">
    <source>
        <dbReference type="PROSITE-ProRule" id="PRU00434"/>
    </source>
</evidence>
<evidence type="ECO:0000255" key="3">
    <source>
        <dbReference type="PROSITE-ProRule" id="PRU00441"/>
    </source>
</evidence>
<evidence type="ECO:0000255" key="4">
    <source>
        <dbReference type="PROSITE-ProRule" id="PRU00498"/>
    </source>
</evidence>
<evidence type="ECO:0000256" key="5">
    <source>
        <dbReference type="SAM" id="MobiDB-lite"/>
    </source>
</evidence>
<evidence type="ECO:0000269" key="6">
    <source>
    </source>
</evidence>
<evidence type="ECO:0000269" key="7">
    <source>
    </source>
</evidence>
<evidence type="ECO:0000303" key="8">
    <source>
    </source>
</evidence>
<evidence type="ECO:0000303" key="9">
    <source>
    </source>
</evidence>
<evidence type="ECO:0000305" key="10"/>
<evidence type="ECO:0000305" key="11">
    <source>
    </source>
</evidence>
<evidence type="ECO:0000305" key="12">
    <source>
    </source>
</evidence>
<name>SIRA_LEPMC</name>